<reference key="1">
    <citation type="submission" date="2008-05" db="EMBL/GenBank/DDBJ databases">
        <title>Complete sequence of chromosome 1 of Ralstonia pickettii 12J.</title>
        <authorList>
            <person name="Lucas S."/>
            <person name="Copeland A."/>
            <person name="Lapidus A."/>
            <person name="Glavina del Rio T."/>
            <person name="Dalin E."/>
            <person name="Tice H."/>
            <person name="Bruce D."/>
            <person name="Goodwin L."/>
            <person name="Pitluck S."/>
            <person name="Meincke L."/>
            <person name="Brettin T."/>
            <person name="Detter J.C."/>
            <person name="Han C."/>
            <person name="Kuske C.R."/>
            <person name="Schmutz J."/>
            <person name="Larimer F."/>
            <person name="Land M."/>
            <person name="Hauser L."/>
            <person name="Kyrpides N."/>
            <person name="Mikhailova N."/>
            <person name="Marsh T."/>
            <person name="Richardson P."/>
        </authorList>
    </citation>
    <scope>NUCLEOTIDE SEQUENCE [LARGE SCALE GENOMIC DNA]</scope>
    <source>
        <strain>12J</strain>
    </source>
</reference>
<comment type="function">
    <text evidence="1">Transfers a succinyl group from succinyl-CoA to L-homoserine, forming succinyl-L-homoserine.</text>
</comment>
<comment type="catalytic activity">
    <reaction evidence="1">
        <text>L-homoserine + succinyl-CoA = O-succinyl-L-homoserine + CoA</text>
        <dbReference type="Rhea" id="RHEA:22008"/>
        <dbReference type="ChEBI" id="CHEBI:57287"/>
        <dbReference type="ChEBI" id="CHEBI:57292"/>
        <dbReference type="ChEBI" id="CHEBI:57476"/>
        <dbReference type="ChEBI" id="CHEBI:57661"/>
        <dbReference type="EC" id="2.3.1.46"/>
    </reaction>
</comment>
<comment type="pathway">
    <text evidence="1">Amino-acid biosynthesis; L-methionine biosynthesis via de novo pathway; O-succinyl-L-homoserine from L-homoserine: step 1/1.</text>
</comment>
<comment type="subunit">
    <text evidence="1">Homodimer.</text>
</comment>
<comment type="subcellular location">
    <subcellularLocation>
        <location evidence="1">Cytoplasm</location>
    </subcellularLocation>
</comment>
<comment type="similarity">
    <text evidence="1">Belongs to the AB hydrolase superfamily. MetX family.</text>
</comment>
<sequence length="404" mass="44363">MTDIQADPAVTAADAAQADTSSPTAHQGKPANAIGLVVPERMHFAEPLQLRNGSQICGYDLMVETYGTLNADRSNAVLICHALNASHHVAGVHAEGEVGWWDNMVGPGKPVDTNRFFVIGVNNLGSCFGSTGPMSPHPETGLPYGARFPVVTVEDWVNAQARVADRFGIEQFAAVMGGSLGGMQALAWSLMYPDRLRHCVVVASTPKLSAQNIAFNEVARSAILSDPDFHGGDYYAHNVKPKRGLRVARMIGHITYLSDEDMAAKFGRELKAEDIRFSFDVEFQVESYLRYQGDKFAEYFDANTYLLITRALDYFDPALAYGGSLTKAVAHTKASYLVVSFMTDWRFAPARSRELVKALLDNKHPVTYGEIDAPHGHDAFLLEDARYHALVRAYYERIAQEIGA</sequence>
<evidence type="ECO:0000255" key="1">
    <source>
        <dbReference type="HAMAP-Rule" id="MF_00296"/>
    </source>
</evidence>
<evidence type="ECO:0000256" key="2">
    <source>
        <dbReference type="SAM" id="MobiDB-lite"/>
    </source>
</evidence>
<name>METXS_RALPJ</name>
<dbReference type="EC" id="2.3.1.46" evidence="1"/>
<dbReference type="EMBL" id="CP001068">
    <property type="protein sequence ID" value="ACD28841.1"/>
    <property type="molecule type" value="Genomic_DNA"/>
</dbReference>
<dbReference type="SMR" id="B2U7Y8"/>
<dbReference type="STRING" id="402626.Rpic_3723"/>
<dbReference type="ESTHER" id="ralpj-metx">
    <property type="family name" value="Homoserine_transacetylase"/>
</dbReference>
<dbReference type="KEGG" id="rpi:Rpic_3723"/>
<dbReference type="eggNOG" id="COG2021">
    <property type="taxonomic scope" value="Bacteria"/>
</dbReference>
<dbReference type="HOGENOM" id="CLU_028760_1_2_4"/>
<dbReference type="UniPathway" id="UPA00051">
    <property type="reaction ID" value="UER00075"/>
</dbReference>
<dbReference type="GO" id="GO:0005737">
    <property type="term" value="C:cytoplasm"/>
    <property type="evidence" value="ECO:0007669"/>
    <property type="project" value="UniProtKB-SubCell"/>
</dbReference>
<dbReference type="GO" id="GO:0004414">
    <property type="term" value="F:homoserine O-acetyltransferase activity"/>
    <property type="evidence" value="ECO:0007669"/>
    <property type="project" value="TreeGrafter"/>
</dbReference>
<dbReference type="GO" id="GO:0008899">
    <property type="term" value="F:homoserine O-succinyltransferase activity"/>
    <property type="evidence" value="ECO:0007669"/>
    <property type="project" value="UniProtKB-UniRule"/>
</dbReference>
<dbReference type="GO" id="GO:0009092">
    <property type="term" value="P:homoserine metabolic process"/>
    <property type="evidence" value="ECO:0007669"/>
    <property type="project" value="TreeGrafter"/>
</dbReference>
<dbReference type="GO" id="GO:0009086">
    <property type="term" value="P:methionine biosynthetic process"/>
    <property type="evidence" value="ECO:0007669"/>
    <property type="project" value="UniProtKB-UniRule"/>
</dbReference>
<dbReference type="FunFam" id="1.10.1740.110:FF:000001">
    <property type="entry name" value="Homoserine O-acetyltransferase"/>
    <property type="match status" value="1"/>
</dbReference>
<dbReference type="Gene3D" id="1.10.1740.110">
    <property type="match status" value="1"/>
</dbReference>
<dbReference type="Gene3D" id="3.40.50.1820">
    <property type="entry name" value="alpha/beta hydrolase"/>
    <property type="match status" value="1"/>
</dbReference>
<dbReference type="HAMAP" id="MF_00296">
    <property type="entry name" value="MetX_acyltransf"/>
    <property type="match status" value="1"/>
</dbReference>
<dbReference type="InterPro" id="IPR000073">
    <property type="entry name" value="AB_hydrolase_1"/>
</dbReference>
<dbReference type="InterPro" id="IPR029058">
    <property type="entry name" value="AB_hydrolase_fold"/>
</dbReference>
<dbReference type="InterPro" id="IPR008220">
    <property type="entry name" value="HAT_MetX-like"/>
</dbReference>
<dbReference type="NCBIfam" id="TIGR01392">
    <property type="entry name" value="homoserO_Ac_trn"/>
    <property type="match status" value="1"/>
</dbReference>
<dbReference type="NCBIfam" id="NF001209">
    <property type="entry name" value="PRK00175.1"/>
    <property type="match status" value="1"/>
</dbReference>
<dbReference type="PANTHER" id="PTHR32268">
    <property type="entry name" value="HOMOSERINE O-ACETYLTRANSFERASE"/>
    <property type="match status" value="1"/>
</dbReference>
<dbReference type="PANTHER" id="PTHR32268:SF11">
    <property type="entry name" value="HOMOSERINE O-ACETYLTRANSFERASE"/>
    <property type="match status" value="1"/>
</dbReference>
<dbReference type="Pfam" id="PF00561">
    <property type="entry name" value="Abhydrolase_1"/>
    <property type="match status" value="1"/>
</dbReference>
<dbReference type="PIRSF" id="PIRSF000443">
    <property type="entry name" value="Homoser_Ac_trans"/>
    <property type="match status" value="1"/>
</dbReference>
<dbReference type="SUPFAM" id="SSF53474">
    <property type="entry name" value="alpha/beta-Hydrolases"/>
    <property type="match status" value="1"/>
</dbReference>
<organism>
    <name type="scientific">Ralstonia pickettii (strain 12J)</name>
    <dbReference type="NCBI Taxonomy" id="402626"/>
    <lineage>
        <taxon>Bacteria</taxon>
        <taxon>Pseudomonadati</taxon>
        <taxon>Pseudomonadota</taxon>
        <taxon>Betaproteobacteria</taxon>
        <taxon>Burkholderiales</taxon>
        <taxon>Burkholderiaceae</taxon>
        <taxon>Ralstonia</taxon>
    </lineage>
</organism>
<feature type="chain" id="PRO_1000115234" description="Homoserine O-succinyltransferase">
    <location>
        <begin position="1"/>
        <end position="404"/>
    </location>
</feature>
<feature type="domain" description="AB hydrolase-1" evidence="1">
    <location>
        <begin position="75"/>
        <end position="384"/>
    </location>
</feature>
<feature type="region of interest" description="Disordered" evidence="2">
    <location>
        <begin position="1"/>
        <end position="30"/>
    </location>
</feature>
<feature type="compositionally biased region" description="Low complexity" evidence="2">
    <location>
        <begin position="1"/>
        <end position="25"/>
    </location>
</feature>
<feature type="active site" description="Nucleophile" evidence="1">
    <location>
        <position position="179"/>
    </location>
</feature>
<feature type="active site" evidence="1">
    <location>
        <position position="344"/>
    </location>
</feature>
<feature type="active site" evidence="1">
    <location>
        <position position="377"/>
    </location>
</feature>
<feature type="binding site" evidence="1">
    <location>
        <position position="249"/>
    </location>
    <ligand>
        <name>substrate</name>
    </ligand>
</feature>
<feature type="binding site" evidence="1">
    <location>
        <position position="378"/>
    </location>
    <ligand>
        <name>substrate</name>
    </ligand>
</feature>
<feature type="site" description="Important for acyl-CoA specificity" evidence="1">
    <location>
        <position position="346"/>
    </location>
</feature>
<accession>B2U7Y8</accession>
<protein>
    <recommendedName>
        <fullName evidence="1">Homoserine O-succinyltransferase</fullName>
        <shortName evidence="1">HST</shortName>
        <ecNumber evidence="1">2.3.1.46</ecNumber>
    </recommendedName>
    <alternativeName>
        <fullName evidence="1">Homoserine transsuccinylase</fullName>
        <shortName evidence="1">HTS</shortName>
    </alternativeName>
</protein>
<gene>
    <name evidence="1" type="primary">metXS</name>
    <name type="ordered locus">Rpic_3723</name>
</gene>
<keyword id="KW-0012">Acyltransferase</keyword>
<keyword id="KW-0028">Amino-acid biosynthesis</keyword>
<keyword id="KW-0963">Cytoplasm</keyword>
<keyword id="KW-0486">Methionine biosynthesis</keyword>
<keyword id="KW-0808">Transferase</keyword>
<proteinExistence type="inferred from homology"/>